<comment type="function">
    <text evidence="1">Catalyzes the oxidation of 5,10-methylenetetrahydrofolate to 5,10-methenyltetrahydrofolate and then the hydrolysis of 5,10-methenyltetrahydrofolate to 10-formyltetrahydrofolate.</text>
</comment>
<comment type="catalytic activity">
    <reaction evidence="1">
        <text>(6R)-5,10-methylene-5,6,7,8-tetrahydrofolate + NADP(+) = (6R)-5,10-methenyltetrahydrofolate + NADPH</text>
        <dbReference type="Rhea" id="RHEA:22812"/>
        <dbReference type="ChEBI" id="CHEBI:15636"/>
        <dbReference type="ChEBI" id="CHEBI:57455"/>
        <dbReference type="ChEBI" id="CHEBI:57783"/>
        <dbReference type="ChEBI" id="CHEBI:58349"/>
        <dbReference type="EC" id="1.5.1.5"/>
    </reaction>
</comment>
<comment type="catalytic activity">
    <reaction evidence="1">
        <text>(6R)-5,10-methenyltetrahydrofolate + H2O = (6R)-10-formyltetrahydrofolate + H(+)</text>
        <dbReference type="Rhea" id="RHEA:23700"/>
        <dbReference type="ChEBI" id="CHEBI:15377"/>
        <dbReference type="ChEBI" id="CHEBI:15378"/>
        <dbReference type="ChEBI" id="CHEBI:57455"/>
        <dbReference type="ChEBI" id="CHEBI:195366"/>
        <dbReference type="EC" id="3.5.4.9"/>
    </reaction>
</comment>
<comment type="pathway">
    <text evidence="1">One-carbon metabolism; tetrahydrofolate interconversion.</text>
</comment>
<comment type="subunit">
    <text evidence="1">Homodimer.</text>
</comment>
<comment type="similarity">
    <text evidence="1">Belongs to the tetrahydrofolate dehydrogenase/cyclohydrolase family.</text>
</comment>
<comment type="sequence caution" evidence="2">
    <conflict type="erroneous initiation">
        <sequence resource="EMBL-CDS" id="AAV60317"/>
    </conflict>
</comment>
<evidence type="ECO:0000255" key="1">
    <source>
        <dbReference type="HAMAP-Rule" id="MF_01576"/>
    </source>
</evidence>
<evidence type="ECO:0000305" key="2"/>
<sequence length="284" mass="31357">MAIIMDGKALAVNMQEQLQEKVARLKEKEWIVPGLVVIMVGENPASQVYVRNKERAAKKAGFHSKTVNLSESISEEELIEVIEKYNQDPLFHGILVQLPLPNHISEMRILLAIDPKKDVDGFHPMNTGNLWNGRPQMVPCTPAGIMEILREYNVELEGKTAVIIGRSNIVGKPMAQLLLEKNATVTLTHSRTPHLAKVCNKADVLIVAIGRAKFVTEEFVKEGAVVIDVGINRDEEGKLCGDVDFDQVKEKVSMITPVPGGVGPMTITMLMEQTYQAALRSLKG</sequence>
<organism>
    <name type="scientific">Streptococcus thermophilus (strain ATCC BAA-250 / LMG 18311)</name>
    <dbReference type="NCBI Taxonomy" id="264199"/>
    <lineage>
        <taxon>Bacteria</taxon>
        <taxon>Bacillati</taxon>
        <taxon>Bacillota</taxon>
        <taxon>Bacilli</taxon>
        <taxon>Lactobacillales</taxon>
        <taxon>Streptococcaceae</taxon>
        <taxon>Streptococcus</taxon>
    </lineage>
</organism>
<dbReference type="EC" id="1.5.1.5" evidence="1"/>
<dbReference type="EC" id="3.5.4.9" evidence="1"/>
<dbReference type="EMBL" id="CP000023">
    <property type="protein sequence ID" value="AAV60317.1"/>
    <property type="status" value="ALT_INIT"/>
    <property type="molecule type" value="Genomic_DNA"/>
</dbReference>
<dbReference type="RefSeq" id="WP_002946708.1">
    <property type="nucleotide sequence ID" value="NC_006448.1"/>
</dbReference>
<dbReference type="SMR" id="Q5M583"/>
<dbReference type="STRING" id="264199.stu0611"/>
<dbReference type="KEGG" id="stl:stu0611"/>
<dbReference type="PATRIC" id="fig|264199.4.peg.620"/>
<dbReference type="eggNOG" id="COG0190">
    <property type="taxonomic scope" value="Bacteria"/>
</dbReference>
<dbReference type="HOGENOM" id="CLU_034045_2_1_9"/>
<dbReference type="UniPathway" id="UPA00193"/>
<dbReference type="Proteomes" id="UP000001170">
    <property type="component" value="Chromosome"/>
</dbReference>
<dbReference type="GO" id="GO:0005829">
    <property type="term" value="C:cytosol"/>
    <property type="evidence" value="ECO:0007669"/>
    <property type="project" value="TreeGrafter"/>
</dbReference>
<dbReference type="GO" id="GO:0004477">
    <property type="term" value="F:methenyltetrahydrofolate cyclohydrolase activity"/>
    <property type="evidence" value="ECO:0007669"/>
    <property type="project" value="UniProtKB-UniRule"/>
</dbReference>
<dbReference type="GO" id="GO:0004488">
    <property type="term" value="F:methylenetetrahydrofolate dehydrogenase (NADP+) activity"/>
    <property type="evidence" value="ECO:0007669"/>
    <property type="project" value="UniProtKB-UniRule"/>
</dbReference>
<dbReference type="GO" id="GO:0000105">
    <property type="term" value="P:L-histidine biosynthetic process"/>
    <property type="evidence" value="ECO:0007669"/>
    <property type="project" value="UniProtKB-KW"/>
</dbReference>
<dbReference type="GO" id="GO:0009086">
    <property type="term" value="P:methionine biosynthetic process"/>
    <property type="evidence" value="ECO:0007669"/>
    <property type="project" value="UniProtKB-KW"/>
</dbReference>
<dbReference type="GO" id="GO:0006164">
    <property type="term" value="P:purine nucleotide biosynthetic process"/>
    <property type="evidence" value="ECO:0007669"/>
    <property type="project" value="UniProtKB-KW"/>
</dbReference>
<dbReference type="GO" id="GO:0035999">
    <property type="term" value="P:tetrahydrofolate interconversion"/>
    <property type="evidence" value="ECO:0007669"/>
    <property type="project" value="UniProtKB-UniRule"/>
</dbReference>
<dbReference type="CDD" id="cd01080">
    <property type="entry name" value="NAD_bind_m-THF_DH_Cyclohyd"/>
    <property type="match status" value="1"/>
</dbReference>
<dbReference type="FunFam" id="3.40.50.720:FF:000094">
    <property type="entry name" value="Bifunctional protein FolD"/>
    <property type="match status" value="1"/>
</dbReference>
<dbReference type="FunFam" id="3.40.50.10860:FF:000005">
    <property type="entry name" value="C-1-tetrahydrofolate synthase, cytoplasmic, putative"/>
    <property type="match status" value="1"/>
</dbReference>
<dbReference type="Gene3D" id="3.40.50.10860">
    <property type="entry name" value="Leucine Dehydrogenase, chain A, domain 1"/>
    <property type="match status" value="1"/>
</dbReference>
<dbReference type="Gene3D" id="3.40.50.720">
    <property type="entry name" value="NAD(P)-binding Rossmann-like Domain"/>
    <property type="match status" value="1"/>
</dbReference>
<dbReference type="HAMAP" id="MF_01576">
    <property type="entry name" value="THF_DHG_CYH"/>
    <property type="match status" value="1"/>
</dbReference>
<dbReference type="InterPro" id="IPR046346">
    <property type="entry name" value="Aminoacid_DH-like_N_sf"/>
</dbReference>
<dbReference type="InterPro" id="IPR036291">
    <property type="entry name" value="NAD(P)-bd_dom_sf"/>
</dbReference>
<dbReference type="InterPro" id="IPR000672">
    <property type="entry name" value="THF_DH/CycHdrlase"/>
</dbReference>
<dbReference type="InterPro" id="IPR020630">
    <property type="entry name" value="THF_DH/CycHdrlase_cat_dom"/>
</dbReference>
<dbReference type="InterPro" id="IPR020867">
    <property type="entry name" value="THF_DH/CycHdrlase_CS"/>
</dbReference>
<dbReference type="InterPro" id="IPR020631">
    <property type="entry name" value="THF_DH/CycHdrlase_NAD-bd_dom"/>
</dbReference>
<dbReference type="NCBIfam" id="NF008058">
    <property type="entry name" value="PRK10792.1"/>
    <property type="match status" value="1"/>
</dbReference>
<dbReference type="NCBIfam" id="NF010776">
    <property type="entry name" value="PRK14179.1"/>
    <property type="match status" value="1"/>
</dbReference>
<dbReference type="NCBIfam" id="NF010783">
    <property type="entry name" value="PRK14186.1"/>
    <property type="match status" value="1"/>
</dbReference>
<dbReference type="PANTHER" id="PTHR48099:SF5">
    <property type="entry name" value="C-1-TETRAHYDROFOLATE SYNTHASE, CYTOPLASMIC"/>
    <property type="match status" value="1"/>
</dbReference>
<dbReference type="PANTHER" id="PTHR48099">
    <property type="entry name" value="C-1-TETRAHYDROFOLATE SYNTHASE, CYTOPLASMIC-RELATED"/>
    <property type="match status" value="1"/>
</dbReference>
<dbReference type="Pfam" id="PF00763">
    <property type="entry name" value="THF_DHG_CYH"/>
    <property type="match status" value="1"/>
</dbReference>
<dbReference type="Pfam" id="PF02882">
    <property type="entry name" value="THF_DHG_CYH_C"/>
    <property type="match status" value="1"/>
</dbReference>
<dbReference type="PRINTS" id="PR00085">
    <property type="entry name" value="THFDHDRGNASE"/>
</dbReference>
<dbReference type="SUPFAM" id="SSF53223">
    <property type="entry name" value="Aminoacid dehydrogenase-like, N-terminal domain"/>
    <property type="match status" value="1"/>
</dbReference>
<dbReference type="SUPFAM" id="SSF51735">
    <property type="entry name" value="NAD(P)-binding Rossmann-fold domains"/>
    <property type="match status" value="1"/>
</dbReference>
<dbReference type="PROSITE" id="PS00766">
    <property type="entry name" value="THF_DHG_CYH_1"/>
    <property type="match status" value="1"/>
</dbReference>
<dbReference type="PROSITE" id="PS00767">
    <property type="entry name" value="THF_DHG_CYH_2"/>
    <property type="match status" value="1"/>
</dbReference>
<protein>
    <recommendedName>
        <fullName evidence="1">Bifunctional protein FolD</fullName>
    </recommendedName>
    <domain>
        <recommendedName>
            <fullName evidence="1">Methylenetetrahydrofolate dehydrogenase</fullName>
            <ecNumber evidence="1">1.5.1.5</ecNumber>
        </recommendedName>
    </domain>
    <domain>
        <recommendedName>
            <fullName evidence="1">Methenyltetrahydrofolate cyclohydrolase</fullName>
            <ecNumber evidence="1">3.5.4.9</ecNumber>
        </recommendedName>
    </domain>
</protein>
<reference key="1">
    <citation type="journal article" date="2004" name="Nat. Biotechnol.">
        <title>Complete sequence and comparative genome analysis of the dairy bacterium Streptococcus thermophilus.</title>
        <authorList>
            <person name="Bolotin A."/>
            <person name="Quinquis B."/>
            <person name="Renault P."/>
            <person name="Sorokin A."/>
            <person name="Ehrlich S.D."/>
            <person name="Kulakauskas S."/>
            <person name="Lapidus A."/>
            <person name="Goltsman E."/>
            <person name="Mazur M."/>
            <person name="Pusch G.D."/>
            <person name="Fonstein M."/>
            <person name="Overbeek R."/>
            <person name="Kyprides N."/>
            <person name="Purnelle B."/>
            <person name="Prozzi D."/>
            <person name="Ngui K."/>
            <person name="Masuy D."/>
            <person name="Hancy F."/>
            <person name="Burteau S."/>
            <person name="Boutry M."/>
            <person name="Delcour J."/>
            <person name="Goffeau A."/>
            <person name="Hols P."/>
        </authorList>
    </citation>
    <scope>NUCLEOTIDE SEQUENCE [LARGE SCALE GENOMIC DNA]</scope>
    <source>
        <strain>ATCC BAA-250 / LMG 18311</strain>
    </source>
</reference>
<feature type="chain" id="PRO_0000268523" description="Bifunctional protein FolD">
    <location>
        <begin position="1"/>
        <end position="284"/>
    </location>
</feature>
<feature type="binding site" evidence="1">
    <location>
        <begin position="165"/>
        <end position="167"/>
    </location>
    <ligand>
        <name>NADP(+)</name>
        <dbReference type="ChEBI" id="CHEBI:58349"/>
    </ligand>
</feature>
<feature type="binding site" evidence="1">
    <location>
        <position position="190"/>
    </location>
    <ligand>
        <name>NADP(+)</name>
        <dbReference type="ChEBI" id="CHEBI:58349"/>
    </ligand>
</feature>
<feature type="binding site" evidence="1">
    <location>
        <position position="231"/>
    </location>
    <ligand>
        <name>NADP(+)</name>
        <dbReference type="ChEBI" id="CHEBI:58349"/>
    </ligand>
</feature>
<name>FOLD_STRT2</name>
<proteinExistence type="inferred from homology"/>
<keyword id="KW-0028">Amino-acid biosynthesis</keyword>
<keyword id="KW-0368">Histidine biosynthesis</keyword>
<keyword id="KW-0378">Hydrolase</keyword>
<keyword id="KW-0486">Methionine biosynthesis</keyword>
<keyword id="KW-0511">Multifunctional enzyme</keyword>
<keyword id="KW-0521">NADP</keyword>
<keyword id="KW-0554">One-carbon metabolism</keyword>
<keyword id="KW-0560">Oxidoreductase</keyword>
<keyword id="KW-0658">Purine biosynthesis</keyword>
<keyword id="KW-1185">Reference proteome</keyword>
<gene>
    <name evidence="1" type="primary">folD</name>
    <name type="ordered locus">stu0611</name>
</gene>
<accession>Q5M583</accession>